<feature type="chain" id="PRO_0000061288" description="Cytochrome b">
    <location>
        <begin position="1"/>
        <end position="176" status="greater than"/>
    </location>
</feature>
<feature type="transmembrane region" description="Helical" evidence="2">
    <location>
        <begin position="33"/>
        <end position="53"/>
    </location>
</feature>
<feature type="transmembrane region" description="Helical" evidence="2">
    <location>
        <begin position="77"/>
        <end position="98"/>
    </location>
</feature>
<feature type="transmembrane region" description="Helical" evidence="2">
    <location>
        <begin position="113"/>
        <end position="133"/>
    </location>
</feature>
<feature type="binding site" description="axial binding residue" evidence="2">
    <location>
        <position position="83"/>
    </location>
    <ligand>
        <name>heme b</name>
        <dbReference type="ChEBI" id="CHEBI:60344"/>
        <label>b562</label>
    </ligand>
    <ligandPart>
        <name>Fe</name>
        <dbReference type="ChEBI" id="CHEBI:18248"/>
    </ligandPart>
</feature>
<feature type="binding site" description="axial binding residue" evidence="2">
    <location>
        <position position="97"/>
    </location>
    <ligand>
        <name>heme b</name>
        <dbReference type="ChEBI" id="CHEBI:60344"/>
        <label>b566</label>
    </ligand>
    <ligandPart>
        <name>Fe</name>
        <dbReference type="ChEBI" id="CHEBI:18248"/>
    </ligandPart>
</feature>
<feature type="non-terminal residue">
    <location>
        <position position="176"/>
    </location>
</feature>
<sequence>MTNIRKTHPLAKIINNSLIDLPAPSNISSWWNFGSLLGICLGLQILTGLFLAMHYTADTATAFNSVTHICRDVNYGWVLRYLHANGASMFFICLYLHVGRGIYYGSYLYKETWNMGVVLLFAVMATAFMGYVLPWGQMSFWGATVITNLLSAIPYIGNDLVEWIWGGFSVDKATLT</sequence>
<keyword id="KW-0249">Electron transport</keyword>
<keyword id="KW-0349">Heme</keyword>
<keyword id="KW-0408">Iron</keyword>
<keyword id="KW-0472">Membrane</keyword>
<keyword id="KW-0479">Metal-binding</keyword>
<keyword id="KW-0496">Mitochondrion</keyword>
<keyword id="KW-0999">Mitochondrion inner membrane</keyword>
<keyword id="KW-0679">Respiratory chain</keyword>
<keyword id="KW-0812">Transmembrane</keyword>
<keyword id="KW-1133">Transmembrane helix</keyword>
<keyword id="KW-0813">Transport</keyword>
<keyword id="KW-0830">Ubiquinone</keyword>
<organism>
    <name type="scientific">Nycticeius humeralis</name>
    <name type="common">Evening bat</name>
    <name type="synonym">Vespertilio humeralis</name>
    <dbReference type="NCBI Taxonomy" id="27670"/>
    <lineage>
        <taxon>Eukaryota</taxon>
        <taxon>Metazoa</taxon>
        <taxon>Chordata</taxon>
        <taxon>Craniata</taxon>
        <taxon>Vertebrata</taxon>
        <taxon>Euteleostomi</taxon>
        <taxon>Mammalia</taxon>
        <taxon>Eutheria</taxon>
        <taxon>Laurasiatheria</taxon>
        <taxon>Chiroptera</taxon>
        <taxon>Yangochiroptera</taxon>
        <taxon>Vespertilionidae</taxon>
        <taxon>Nycticeius</taxon>
    </lineage>
</organism>
<geneLocation type="mitochondrion"/>
<reference key="1">
    <citation type="journal article" date="1994" name="J. Mammal.">
        <title>Familial affinity of Tomopeas ravus (Chiroptera) based on protein electrophoretic and cytochrome b sequence data.</title>
        <authorList>
            <person name="Sudman P.D."/>
            <person name="Barkley L.J."/>
            <person name="Hafner M.S."/>
        </authorList>
    </citation>
    <scope>NUCLEOTIDE SEQUENCE [GENOMIC DNA]</scope>
    <source>
        <strain>Isolate LSUMZ 23913</strain>
        <tissue>Kidney</tissue>
        <tissue>Liver</tissue>
    </source>
</reference>
<protein>
    <recommendedName>
        <fullName>Cytochrome b</fullName>
    </recommendedName>
    <alternativeName>
        <fullName>Complex III subunit 3</fullName>
    </alternativeName>
    <alternativeName>
        <fullName>Complex III subunit III</fullName>
    </alternativeName>
    <alternativeName>
        <fullName>Cytochrome b-c1 complex subunit 3</fullName>
    </alternativeName>
    <alternativeName>
        <fullName>Ubiquinol-cytochrome-c reductase complex cytochrome b subunit</fullName>
    </alternativeName>
</protein>
<proteinExistence type="inferred from homology"/>
<evidence type="ECO:0000250" key="1"/>
<evidence type="ECO:0000250" key="2">
    <source>
        <dbReference type="UniProtKB" id="P00157"/>
    </source>
</evidence>
<evidence type="ECO:0000255" key="3">
    <source>
        <dbReference type="PROSITE-ProRule" id="PRU00968"/>
    </source>
</evidence>
<name>CYB_NYCHU</name>
<gene>
    <name type="primary">MT-CYB</name>
    <name type="synonym">COB</name>
    <name type="synonym">CYTB</name>
    <name type="synonym">MTCYB</name>
</gene>
<comment type="function">
    <text evidence="2">Component of the ubiquinol-cytochrome c reductase complex (complex III or cytochrome b-c1 complex) that is part of the mitochondrial respiratory chain. The b-c1 complex mediates electron transfer from ubiquinol to cytochrome c. Contributes to the generation of a proton gradient across the mitochondrial membrane that is then used for ATP synthesis.</text>
</comment>
<comment type="cofactor">
    <cofactor evidence="2">
        <name>heme b</name>
        <dbReference type="ChEBI" id="CHEBI:60344"/>
    </cofactor>
    <text evidence="2">Binds 2 heme b groups non-covalently.</text>
</comment>
<comment type="subunit">
    <text evidence="2">The cytochrome bc1 complex contains 11 subunits: 3 respiratory subunits (MT-CYB, CYC1 and UQCRFS1), 2 core proteins (UQCRC1 and UQCRC2) and 6 low-molecular weight proteins (UQCRH/QCR6, UQCRB/QCR7, UQCRQ/QCR8, UQCR10/QCR9, UQCR11/QCR10 and a cleavage product of UQCRFS1). This cytochrome bc1 complex then forms a dimer.</text>
</comment>
<comment type="subcellular location">
    <subcellularLocation>
        <location evidence="2">Mitochondrion inner membrane</location>
        <topology evidence="2">Multi-pass membrane protein</topology>
    </subcellularLocation>
</comment>
<comment type="miscellaneous">
    <text evidence="1">Heme 1 (or BL or b562) is low-potential and absorbs at about 562 nm, and heme 2 (or BH or b566) is high-potential and absorbs at about 566 nm.</text>
</comment>
<comment type="similarity">
    <text evidence="3">Belongs to the cytochrome b family.</text>
</comment>
<comment type="caution">
    <text evidence="2">The full-length protein contains only eight transmembrane helices, not nine as predicted by bioinformatics tools.</text>
</comment>
<accession>Q36572</accession>
<dbReference type="EMBL" id="L19727">
    <property type="protein sequence ID" value="AAA17773.1"/>
    <property type="molecule type" value="Genomic_DNA"/>
</dbReference>
<dbReference type="SMR" id="Q36572"/>
<dbReference type="GO" id="GO:0005743">
    <property type="term" value="C:mitochondrial inner membrane"/>
    <property type="evidence" value="ECO:0007669"/>
    <property type="project" value="UniProtKB-SubCell"/>
</dbReference>
<dbReference type="GO" id="GO:0046872">
    <property type="term" value="F:metal ion binding"/>
    <property type="evidence" value="ECO:0007669"/>
    <property type="project" value="UniProtKB-KW"/>
</dbReference>
<dbReference type="GO" id="GO:0008121">
    <property type="term" value="F:ubiquinol-cytochrome-c reductase activity"/>
    <property type="evidence" value="ECO:0007669"/>
    <property type="project" value="TreeGrafter"/>
</dbReference>
<dbReference type="GO" id="GO:0006122">
    <property type="term" value="P:mitochondrial electron transport, ubiquinol to cytochrome c"/>
    <property type="evidence" value="ECO:0007669"/>
    <property type="project" value="TreeGrafter"/>
</dbReference>
<dbReference type="CDD" id="cd00284">
    <property type="entry name" value="Cytochrome_b_N"/>
    <property type="match status" value="1"/>
</dbReference>
<dbReference type="Gene3D" id="1.20.810.10">
    <property type="entry name" value="Cytochrome Bc1 Complex, Chain C"/>
    <property type="match status" value="1"/>
</dbReference>
<dbReference type="InterPro" id="IPR005797">
    <property type="entry name" value="Cyt_b/b6_N"/>
</dbReference>
<dbReference type="InterPro" id="IPR027387">
    <property type="entry name" value="Cytb/b6-like_sf"/>
</dbReference>
<dbReference type="InterPro" id="IPR048259">
    <property type="entry name" value="Cytochrome_b_N_euk/bac"/>
</dbReference>
<dbReference type="InterPro" id="IPR016174">
    <property type="entry name" value="Di-haem_cyt_TM"/>
</dbReference>
<dbReference type="PANTHER" id="PTHR19271">
    <property type="entry name" value="CYTOCHROME B"/>
    <property type="match status" value="1"/>
</dbReference>
<dbReference type="PANTHER" id="PTHR19271:SF16">
    <property type="entry name" value="CYTOCHROME B"/>
    <property type="match status" value="1"/>
</dbReference>
<dbReference type="Pfam" id="PF00033">
    <property type="entry name" value="Cytochrome_B"/>
    <property type="match status" value="1"/>
</dbReference>
<dbReference type="SUPFAM" id="SSF81342">
    <property type="entry name" value="Transmembrane di-heme cytochromes"/>
    <property type="match status" value="1"/>
</dbReference>
<dbReference type="PROSITE" id="PS51002">
    <property type="entry name" value="CYTB_NTER"/>
    <property type="match status" value="1"/>
</dbReference>